<comment type="function">
    <text evidence="1">Required for rescue of stalled ribosomes mediated by trans-translation. Binds to transfer-messenger RNA (tmRNA), required for stable association of tmRNA with ribosomes. tmRNA and SmpB together mimic tRNA shape, replacing the anticodon stem-loop with SmpB. tmRNA is encoded by the ssrA gene; the 2 termini fold to resemble tRNA(Ala) and it encodes a 'tag peptide', a short internal open reading frame. During trans-translation Ala-aminoacylated tmRNA acts like a tRNA, entering the A-site of stalled ribosomes, displacing the stalled mRNA. The ribosome then switches to translate the ORF on the tmRNA; the nascent peptide is terminated with the 'tag peptide' encoded by the tmRNA and targeted for degradation. The ribosome is freed to recommence translation, which seems to be the essential function of trans-translation.</text>
</comment>
<comment type="subcellular location">
    <subcellularLocation>
        <location evidence="1">Cytoplasm</location>
    </subcellularLocation>
    <text evidence="1">The tmRNA-SmpB complex associates with stalled 70S ribosomes.</text>
</comment>
<comment type="similarity">
    <text evidence="1">Belongs to the SmpB family.</text>
</comment>
<evidence type="ECO:0000255" key="1">
    <source>
        <dbReference type="HAMAP-Rule" id="MF_00023"/>
    </source>
</evidence>
<gene>
    <name evidence="1" type="primary">smpB</name>
    <name type="ordered locus">BCAH820_5212</name>
</gene>
<protein>
    <recommendedName>
        <fullName evidence="1">SsrA-binding protein</fullName>
    </recommendedName>
    <alternativeName>
        <fullName evidence="1">Small protein B</fullName>
    </alternativeName>
</protein>
<keyword id="KW-0963">Cytoplasm</keyword>
<keyword id="KW-0694">RNA-binding</keyword>
<sequence length="155" mass="17862">MPKGSGKVIAQNKKAFHDYFIEETYEAGLVLQGTEIKSIRAGRVNLKDAFARVHNGEVWVHNMHISTYEQGNRFNHDPLRTRKLLLHKKEIEKLAGASKETGYALVPVRIYLKNGFAKMALGLAKGKKQYDKRHDLKEKEAKREIARAFRDRQKM</sequence>
<feature type="chain" id="PRO_1000116412" description="SsrA-binding protein">
    <location>
        <begin position="1"/>
        <end position="155"/>
    </location>
</feature>
<organism>
    <name type="scientific">Bacillus cereus (strain AH820)</name>
    <dbReference type="NCBI Taxonomy" id="405535"/>
    <lineage>
        <taxon>Bacteria</taxon>
        <taxon>Bacillati</taxon>
        <taxon>Bacillota</taxon>
        <taxon>Bacilli</taxon>
        <taxon>Bacillales</taxon>
        <taxon>Bacillaceae</taxon>
        <taxon>Bacillus</taxon>
        <taxon>Bacillus cereus group</taxon>
    </lineage>
</organism>
<name>SSRP_BACC0</name>
<dbReference type="EMBL" id="CP001283">
    <property type="protein sequence ID" value="ACK90818.1"/>
    <property type="molecule type" value="Genomic_DNA"/>
</dbReference>
<dbReference type="RefSeq" id="WP_001123905.1">
    <property type="nucleotide sequence ID" value="NC_011773.1"/>
</dbReference>
<dbReference type="SMR" id="B7JFF5"/>
<dbReference type="GeneID" id="45024939"/>
<dbReference type="KEGG" id="bcu:BCAH820_5212"/>
<dbReference type="HOGENOM" id="CLU_108953_0_0_9"/>
<dbReference type="Proteomes" id="UP000001363">
    <property type="component" value="Chromosome"/>
</dbReference>
<dbReference type="GO" id="GO:0005829">
    <property type="term" value="C:cytosol"/>
    <property type="evidence" value="ECO:0007669"/>
    <property type="project" value="TreeGrafter"/>
</dbReference>
<dbReference type="GO" id="GO:0003723">
    <property type="term" value="F:RNA binding"/>
    <property type="evidence" value="ECO:0007669"/>
    <property type="project" value="UniProtKB-UniRule"/>
</dbReference>
<dbReference type="GO" id="GO:0070929">
    <property type="term" value="P:trans-translation"/>
    <property type="evidence" value="ECO:0007669"/>
    <property type="project" value="UniProtKB-UniRule"/>
</dbReference>
<dbReference type="CDD" id="cd09294">
    <property type="entry name" value="SmpB"/>
    <property type="match status" value="1"/>
</dbReference>
<dbReference type="Gene3D" id="2.40.280.10">
    <property type="match status" value="1"/>
</dbReference>
<dbReference type="HAMAP" id="MF_00023">
    <property type="entry name" value="SmpB"/>
    <property type="match status" value="1"/>
</dbReference>
<dbReference type="InterPro" id="IPR023620">
    <property type="entry name" value="SmpB"/>
</dbReference>
<dbReference type="InterPro" id="IPR000037">
    <property type="entry name" value="SsrA-bd_prot"/>
</dbReference>
<dbReference type="InterPro" id="IPR020081">
    <property type="entry name" value="SsrA-bd_prot_CS"/>
</dbReference>
<dbReference type="NCBIfam" id="NF003843">
    <property type="entry name" value="PRK05422.1"/>
    <property type="match status" value="1"/>
</dbReference>
<dbReference type="NCBIfam" id="TIGR00086">
    <property type="entry name" value="smpB"/>
    <property type="match status" value="1"/>
</dbReference>
<dbReference type="PANTHER" id="PTHR30308:SF2">
    <property type="entry name" value="SSRA-BINDING PROTEIN"/>
    <property type="match status" value="1"/>
</dbReference>
<dbReference type="PANTHER" id="PTHR30308">
    <property type="entry name" value="TMRNA-BINDING COMPONENT OF TRANS-TRANSLATION TAGGING COMPLEX"/>
    <property type="match status" value="1"/>
</dbReference>
<dbReference type="Pfam" id="PF01668">
    <property type="entry name" value="SmpB"/>
    <property type="match status" value="1"/>
</dbReference>
<dbReference type="SUPFAM" id="SSF74982">
    <property type="entry name" value="Small protein B (SmpB)"/>
    <property type="match status" value="1"/>
</dbReference>
<dbReference type="PROSITE" id="PS01317">
    <property type="entry name" value="SSRP"/>
    <property type="match status" value="1"/>
</dbReference>
<reference key="1">
    <citation type="submission" date="2008-10" db="EMBL/GenBank/DDBJ databases">
        <title>Genome sequence of Bacillus cereus AH820.</title>
        <authorList>
            <person name="Dodson R.J."/>
            <person name="Durkin A.S."/>
            <person name="Rosovitz M.J."/>
            <person name="Rasko D.A."/>
            <person name="Hoffmaster A."/>
            <person name="Ravel J."/>
            <person name="Sutton G."/>
        </authorList>
    </citation>
    <scope>NUCLEOTIDE SEQUENCE [LARGE SCALE GENOMIC DNA]</scope>
    <source>
        <strain>AH820</strain>
    </source>
</reference>
<accession>B7JFF5</accession>
<proteinExistence type="inferred from homology"/>